<organism>
    <name type="scientific">Escherichia coli (strain K12 / MC4100 / BW2952)</name>
    <dbReference type="NCBI Taxonomy" id="595496"/>
    <lineage>
        <taxon>Bacteria</taxon>
        <taxon>Pseudomonadati</taxon>
        <taxon>Pseudomonadota</taxon>
        <taxon>Gammaproteobacteria</taxon>
        <taxon>Enterobacterales</taxon>
        <taxon>Enterobacteriaceae</taxon>
        <taxon>Escherichia</taxon>
    </lineage>
</organism>
<dbReference type="EC" id="7.1.1.-" evidence="1"/>
<dbReference type="EMBL" id="CP001396">
    <property type="protein sequence ID" value="ACR63872.1"/>
    <property type="molecule type" value="Genomic_DNA"/>
</dbReference>
<dbReference type="RefSeq" id="WP_000118507.1">
    <property type="nucleotide sequence ID" value="NC_012759.1"/>
</dbReference>
<dbReference type="SMR" id="C4ZUC5"/>
<dbReference type="GeneID" id="93774892"/>
<dbReference type="KEGG" id="ebw:BWG_2056"/>
<dbReference type="HOGENOM" id="CLU_015134_0_1_6"/>
<dbReference type="GO" id="GO:0005886">
    <property type="term" value="C:plasma membrane"/>
    <property type="evidence" value="ECO:0007669"/>
    <property type="project" value="UniProtKB-SubCell"/>
</dbReference>
<dbReference type="GO" id="GO:0003954">
    <property type="term" value="F:NADH dehydrogenase activity"/>
    <property type="evidence" value="ECO:0007669"/>
    <property type="project" value="TreeGrafter"/>
</dbReference>
<dbReference type="GO" id="GO:0016655">
    <property type="term" value="F:oxidoreductase activity, acting on NAD(P)H, quinone or similar compound as acceptor"/>
    <property type="evidence" value="ECO:0007669"/>
    <property type="project" value="UniProtKB-UniRule"/>
</dbReference>
<dbReference type="GO" id="GO:0048038">
    <property type="term" value="F:quinone binding"/>
    <property type="evidence" value="ECO:0007669"/>
    <property type="project" value="UniProtKB-KW"/>
</dbReference>
<dbReference type="GO" id="GO:0009060">
    <property type="term" value="P:aerobic respiration"/>
    <property type="evidence" value="ECO:0007669"/>
    <property type="project" value="TreeGrafter"/>
</dbReference>
<dbReference type="HAMAP" id="MF_01350">
    <property type="entry name" value="NDH1_NuoH"/>
    <property type="match status" value="1"/>
</dbReference>
<dbReference type="InterPro" id="IPR001694">
    <property type="entry name" value="NADH_UbQ_OxRdtase_su1/FPO"/>
</dbReference>
<dbReference type="InterPro" id="IPR018086">
    <property type="entry name" value="NADH_UbQ_OxRdtase_su1_CS"/>
</dbReference>
<dbReference type="NCBIfam" id="NF004740">
    <property type="entry name" value="PRK06076.1-1"/>
    <property type="match status" value="1"/>
</dbReference>
<dbReference type="NCBIfam" id="NF004741">
    <property type="entry name" value="PRK06076.1-2"/>
    <property type="match status" value="1"/>
</dbReference>
<dbReference type="PANTHER" id="PTHR11432">
    <property type="entry name" value="NADH DEHYDROGENASE SUBUNIT 1"/>
    <property type="match status" value="1"/>
</dbReference>
<dbReference type="PANTHER" id="PTHR11432:SF3">
    <property type="entry name" value="NADH-UBIQUINONE OXIDOREDUCTASE CHAIN 1"/>
    <property type="match status" value="1"/>
</dbReference>
<dbReference type="Pfam" id="PF00146">
    <property type="entry name" value="NADHdh"/>
    <property type="match status" value="1"/>
</dbReference>
<dbReference type="PROSITE" id="PS00667">
    <property type="entry name" value="COMPLEX1_ND1_1"/>
    <property type="match status" value="1"/>
</dbReference>
<dbReference type="PROSITE" id="PS00668">
    <property type="entry name" value="COMPLEX1_ND1_2"/>
    <property type="match status" value="1"/>
</dbReference>
<proteinExistence type="inferred from homology"/>
<keyword id="KW-0997">Cell inner membrane</keyword>
<keyword id="KW-1003">Cell membrane</keyword>
<keyword id="KW-0472">Membrane</keyword>
<keyword id="KW-0520">NAD</keyword>
<keyword id="KW-0874">Quinone</keyword>
<keyword id="KW-1278">Translocase</keyword>
<keyword id="KW-0812">Transmembrane</keyword>
<keyword id="KW-1133">Transmembrane helix</keyword>
<keyword id="KW-0830">Ubiquinone</keyword>
<name>NUOH_ECOBW</name>
<sequence>MSWISPELIEILLTILKAVVILLVVVTCGAFMSFGERRLLGLFQNRYGPNRVGWGGSLQLVADMIKMFFKEDWIPKFSDRVIFTLAPMIAFTSLLLAFAIVPVSPGWVVADLNIGILFFLMMAGLAVYAVLFAGWSSNNKYSLLGAMRASAQTLSYEVFLGLSLMGVVAQAGSFNMTDIVNSQAHVWNVIPQFFGFITFAIAGVAVCHRHPFDQPEAEQELADGYHIEYSGMKFGLFFVGEYIGIVTISALMVTLFFGGWQGPLLPPFIWFALKTAFFMMMFILIRASLPRPRYDQVMSFGWKICLPLTLINLLVTAAVILWQAQ</sequence>
<evidence type="ECO:0000255" key="1">
    <source>
        <dbReference type="HAMAP-Rule" id="MF_01350"/>
    </source>
</evidence>
<protein>
    <recommendedName>
        <fullName evidence="1">NADH-quinone oxidoreductase subunit H</fullName>
        <ecNumber evidence="1">7.1.1.-</ecNumber>
    </recommendedName>
    <alternativeName>
        <fullName evidence="1">NADH dehydrogenase I subunit H</fullName>
    </alternativeName>
    <alternativeName>
        <fullName evidence="1">NDH-1 subunit H</fullName>
    </alternativeName>
</protein>
<comment type="function">
    <text evidence="1">NDH-1 shuttles electrons from NADH, via FMN and iron-sulfur (Fe-S) centers, to quinones in the respiratory chain. The immediate electron acceptor for the enzyme in this species is believed to be ubiquinone. Couples the redox reaction to proton translocation (for every two electrons transferred, four hydrogen ions are translocated across the cytoplasmic membrane), and thus conserves the redox energy in a proton gradient. This subunit may bind ubiquinone.</text>
</comment>
<comment type="catalytic activity">
    <reaction evidence="1">
        <text>a quinone + NADH + 5 H(+)(in) = a quinol + NAD(+) + 4 H(+)(out)</text>
        <dbReference type="Rhea" id="RHEA:57888"/>
        <dbReference type="ChEBI" id="CHEBI:15378"/>
        <dbReference type="ChEBI" id="CHEBI:24646"/>
        <dbReference type="ChEBI" id="CHEBI:57540"/>
        <dbReference type="ChEBI" id="CHEBI:57945"/>
        <dbReference type="ChEBI" id="CHEBI:132124"/>
    </reaction>
</comment>
<comment type="subunit">
    <text evidence="1">NDH-1 is composed of 13 different subunits. Subunits NuoA, H, J, K, L, M, N constitute the membrane sector of the complex.</text>
</comment>
<comment type="subcellular location">
    <subcellularLocation>
        <location evidence="1">Cell inner membrane</location>
        <topology evidence="1">Multi-pass membrane protein</topology>
    </subcellularLocation>
</comment>
<comment type="similarity">
    <text evidence="1">Belongs to the complex I subunit 1 family.</text>
</comment>
<gene>
    <name evidence="1" type="primary">nuoH</name>
    <name type="ordered locus">BWG_2056</name>
</gene>
<accession>C4ZUC5</accession>
<reference key="1">
    <citation type="journal article" date="2009" name="J. Bacteriol.">
        <title>Genomic sequencing reveals regulatory mutations and recombinational events in the widely used MC4100 lineage of Escherichia coli K-12.</title>
        <authorList>
            <person name="Ferenci T."/>
            <person name="Zhou Z."/>
            <person name="Betteridge T."/>
            <person name="Ren Y."/>
            <person name="Liu Y."/>
            <person name="Feng L."/>
            <person name="Reeves P.R."/>
            <person name="Wang L."/>
        </authorList>
    </citation>
    <scope>NUCLEOTIDE SEQUENCE [LARGE SCALE GENOMIC DNA]</scope>
    <source>
        <strain>K12 / MC4100 / BW2952</strain>
    </source>
</reference>
<feature type="chain" id="PRO_1000214839" description="NADH-quinone oxidoreductase subunit H">
    <location>
        <begin position="1"/>
        <end position="325"/>
    </location>
</feature>
<feature type="transmembrane region" description="Helical" evidence="1">
    <location>
        <begin position="11"/>
        <end position="31"/>
    </location>
</feature>
<feature type="transmembrane region" description="Helical" evidence="1">
    <location>
        <begin position="81"/>
        <end position="101"/>
    </location>
</feature>
<feature type="transmembrane region" description="Helical" evidence="1">
    <location>
        <begin position="114"/>
        <end position="134"/>
    </location>
</feature>
<feature type="transmembrane region" description="Helical" evidence="1">
    <location>
        <begin position="154"/>
        <end position="174"/>
    </location>
</feature>
<feature type="transmembrane region" description="Helical" evidence="1">
    <location>
        <begin position="186"/>
        <end position="206"/>
    </location>
</feature>
<feature type="transmembrane region" description="Helical" evidence="1">
    <location>
        <begin position="237"/>
        <end position="257"/>
    </location>
</feature>
<feature type="transmembrane region" description="Helical" evidence="1">
    <location>
        <begin position="265"/>
        <end position="285"/>
    </location>
</feature>
<feature type="transmembrane region" description="Helical" evidence="1">
    <location>
        <begin position="304"/>
        <end position="324"/>
    </location>
</feature>